<name>DIAA_SERP5</name>
<dbReference type="EMBL" id="CP000826">
    <property type="protein sequence ID" value="ABV43432.1"/>
    <property type="molecule type" value="Genomic_DNA"/>
</dbReference>
<dbReference type="SMR" id="A8GJZ2"/>
<dbReference type="STRING" id="399741.Spro_4338"/>
<dbReference type="KEGG" id="spe:Spro_4338"/>
<dbReference type="eggNOG" id="COG0279">
    <property type="taxonomic scope" value="Bacteria"/>
</dbReference>
<dbReference type="HOGENOM" id="CLU_080999_3_1_6"/>
<dbReference type="OrthoDB" id="9810929at2"/>
<dbReference type="GO" id="GO:0097367">
    <property type="term" value="F:carbohydrate derivative binding"/>
    <property type="evidence" value="ECO:0007669"/>
    <property type="project" value="InterPro"/>
</dbReference>
<dbReference type="GO" id="GO:1901135">
    <property type="term" value="P:carbohydrate derivative metabolic process"/>
    <property type="evidence" value="ECO:0007669"/>
    <property type="project" value="InterPro"/>
</dbReference>
<dbReference type="GO" id="GO:0006260">
    <property type="term" value="P:DNA replication"/>
    <property type="evidence" value="ECO:0007669"/>
    <property type="project" value="UniProtKB-UniRule"/>
</dbReference>
<dbReference type="CDD" id="cd05006">
    <property type="entry name" value="SIS_GmhA"/>
    <property type="match status" value="1"/>
</dbReference>
<dbReference type="FunFam" id="3.40.50.10490:FF:000006">
    <property type="entry name" value="DnaA initiator-associating protein DiaA"/>
    <property type="match status" value="1"/>
</dbReference>
<dbReference type="Gene3D" id="3.40.50.10490">
    <property type="entry name" value="Glucose-6-phosphate isomerase like protein, domain 1"/>
    <property type="match status" value="1"/>
</dbReference>
<dbReference type="HAMAP" id="MF_01157">
    <property type="entry name" value="SIS_DiaA"/>
    <property type="match status" value="1"/>
</dbReference>
<dbReference type="InterPro" id="IPR023070">
    <property type="entry name" value="DiaA"/>
</dbReference>
<dbReference type="InterPro" id="IPR035461">
    <property type="entry name" value="GmhA/DiaA"/>
</dbReference>
<dbReference type="InterPro" id="IPR001347">
    <property type="entry name" value="SIS_dom"/>
</dbReference>
<dbReference type="InterPro" id="IPR046348">
    <property type="entry name" value="SIS_dom_sf"/>
</dbReference>
<dbReference type="InterPro" id="IPR050099">
    <property type="entry name" value="SIS_GmhA/DiaA_subfam"/>
</dbReference>
<dbReference type="NCBIfam" id="NF008138">
    <property type="entry name" value="PRK10886.1"/>
    <property type="match status" value="1"/>
</dbReference>
<dbReference type="PANTHER" id="PTHR30390:SF6">
    <property type="entry name" value="DNAA INITIATOR-ASSOCIATING PROTEIN DIAA"/>
    <property type="match status" value="1"/>
</dbReference>
<dbReference type="PANTHER" id="PTHR30390">
    <property type="entry name" value="SEDOHEPTULOSE 7-PHOSPHATE ISOMERASE / DNAA INITIATOR-ASSOCIATING FACTOR FOR REPLICATION INITIATION"/>
    <property type="match status" value="1"/>
</dbReference>
<dbReference type="Pfam" id="PF13580">
    <property type="entry name" value="SIS_2"/>
    <property type="match status" value="1"/>
</dbReference>
<dbReference type="SUPFAM" id="SSF53697">
    <property type="entry name" value="SIS domain"/>
    <property type="match status" value="1"/>
</dbReference>
<dbReference type="PROSITE" id="PS51464">
    <property type="entry name" value="SIS"/>
    <property type="match status" value="1"/>
</dbReference>
<keyword id="KW-0235">DNA replication</keyword>
<reference key="1">
    <citation type="submission" date="2007-09" db="EMBL/GenBank/DDBJ databases">
        <title>Complete sequence of chromosome of Serratia proteamaculans 568.</title>
        <authorList>
            <consortium name="US DOE Joint Genome Institute"/>
            <person name="Copeland A."/>
            <person name="Lucas S."/>
            <person name="Lapidus A."/>
            <person name="Barry K."/>
            <person name="Glavina del Rio T."/>
            <person name="Dalin E."/>
            <person name="Tice H."/>
            <person name="Pitluck S."/>
            <person name="Chain P."/>
            <person name="Malfatti S."/>
            <person name="Shin M."/>
            <person name="Vergez L."/>
            <person name="Schmutz J."/>
            <person name="Larimer F."/>
            <person name="Land M."/>
            <person name="Hauser L."/>
            <person name="Kyrpides N."/>
            <person name="Kim E."/>
            <person name="Taghavi S."/>
            <person name="Newman L."/>
            <person name="Vangronsveld J."/>
            <person name="van der Lelie D."/>
            <person name="Richardson P."/>
        </authorList>
    </citation>
    <scope>NUCLEOTIDE SEQUENCE [LARGE SCALE GENOMIC DNA]</scope>
    <source>
        <strain>568</strain>
    </source>
</reference>
<organism>
    <name type="scientific">Serratia proteamaculans (strain 568)</name>
    <dbReference type="NCBI Taxonomy" id="399741"/>
    <lineage>
        <taxon>Bacteria</taxon>
        <taxon>Pseudomonadati</taxon>
        <taxon>Pseudomonadota</taxon>
        <taxon>Gammaproteobacteria</taxon>
        <taxon>Enterobacterales</taxon>
        <taxon>Yersiniaceae</taxon>
        <taxon>Serratia</taxon>
    </lineage>
</organism>
<evidence type="ECO:0000255" key="1">
    <source>
        <dbReference type="HAMAP-Rule" id="MF_01157"/>
    </source>
</evidence>
<feature type="chain" id="PRO_1000065548" description="DnaA initiator-associating protein DiaA">
    <location>
        <begin position="1"/>
        <end position="196"/>
    </location>
</feature>
<feature type="domain" description="SIS" evidence="1">
    <location>
        <begin position="34"/>
        <end position="196"/>
    </location>
</feature>
<protein>
    <recommendedName>
        <fullName evidence="1">DnaA initiator-associating protein DiaA</fullName>
    </recommendedName>
</protein>
<gene>
    <name evidence="1" type="primary">diaA</name>
    <name type="ordered locus">Spro_4338</name>
</gene>
<proteinExistence type="inferred from homology"/>
<comment type="function">
    <text evidence="1">Required for the timely initiation of chromosomal replication via direct interactions with the DnaA initiator protein.</text>
</comment>
<comment type="subunit">
    <text evidence="1">Homotetramer; dimer of dimers.</text>
</comment>
<comment type="similarity">
    <text evidence="1">Belongs to the SIS family. DiaA subfamily.</text>
</comment>
<accession>A8GJZ2</accession>
<sequence>MLDRIKACFTESIQTQIAAAEALPDAISRAAMTLVQSLLNGNKILCCGNGTSAANAQHFAASMINRFETERPSLPAIALNADNVVLTAITNDRLHDEVYAKQVRALGHAGDVLLAISTRGNSRDIVKAVEAAVTRDMTIVALTGYDGGELAGLLGQQDVEIRIPSHRSARIQEMHMLTVNCLCDLIDSTLFPHQDE</sequence>